<protein>
    <recommendedName>
        <fullName evidence="1">Large ribosomal subunit protein bL12</fullName>
    </recommendedName>
    <alternativeName>
        <fullName evidence="2">50S ribosomal protein L7/L12</fullName>
    </alternativeName>
</protein>
<dbReference type="EMBL" id="CP000924">
    <property type="protein sequence ID" value="ABY94034.1"/>
    <property type="molecule type" value="Genomic_DNA"/>
</dbReference>
<dbReference type="RefSeq" id="WP_003870271.1">
    <property type="nucleotide sequence ID" value="NC_010321.1"/>
</dbReference>
<dbReference type="SMR" id="B0KCJ1"/>
<dbReference type="STRING" id="340099.Teth39_0365"/>
<dbReference type="KEGG" id="tpd:Teth39_0365"/>
<dbReference type="eggNOG" id="COG0222">
    <property type="taxonomic scope" value="Bacteria"/>
</dbReference>
<dbReference type="HOGENOM" id="CLU_086499_3_2_9"/>
<dbReference type="Proteomes" id="UP000002156">
    <property type="component" value="Chromosome"/>
</dbReference>
<dbReference type="GO" id="GO:0022625">
    <property type="term" value="C:cytosolic large ribosomal subunit"/>
    <property type="evidence" value="ECO:0007669"/>
    <property type="project" value="TreeGrafter"/>
</dbReference>
<dbReference type="GO" id="GO:0003729">
    <property type="term" value="F:mRNA binding"/>
    <property type="evidence" value="ECO:0007669"/>
    <property type="project" value="TreeGrafter"/>
</dbReference>
<dbReference type="GO" id="GO:0003735">
    <property type="term" value="F:structural constituent of ribosome"/>
    <property type="evidence" value="ECO:0007669"/>
    <property type="project" value="InterPro"/>
</dbReference>
<dbReference type="GO" id="GO:0006412">
    <property type="term" value="P:translation"/>
    <property type="evidence" value="ECO:0007669"/>
    <property type="project" value="UniProtKB-UniRule"/>
</dbReference>
<dbReference type="CDD" id="cd00387">
    <property type="entry name" value="Ribosomal_L7_L12"/>
    <property type="match status" value="1"/>
</dbReference>
<dbReference type="FunFam" id="1.20.5.710:FF:000008">
    <property type="entry name" value="50S ribosomal protein L7/L12"/>
    <property type="match status" value="1"/>
</dbReference>
<dbReference type="FunFam" id="3.30.1390.10:FF:000001">
    <property type="entry name" value="50S ribosomal protein L7/L12"/>
    <property type="match status" value="1"/>
</dbReference>
<dbReference type="Gene3D" id="3.30.1390.10">
    <property type="match status" value="1"/>
</dbReference>
<dbReference type="Gene3D" id="1.20.5.710">
    <property type="entry name" value="Single helix bin"/>
    <property type="match status" value="1"/>
</dbReference>
<dbReference type="HAMAP" id="MF_00368">
    <property type="entry name" value="Ribosomal_bL12"/>
    <property type="match status" value="1"/>
</dbReference>
<dbReference type="InterPro" id="IPR000206">
    <property type="entry name" value="Ribosomal_bL12"/>
</dbReference>
<dbReference type="InterPro" id="IPR013823">
    <property type="entry name" value="Ribosomal_bL12_C"/>
</dbReference>
<dbReference type="InterPro" id="IPR014719">
    <property type="entry name" value="Ribosomal_bL12_C/ClpS-like"/>
</dbReference>
<dbReference type="InterPro" id="IPR008932">
    <property type="entry name" value="Ribosomal_bL12_oligo"/>
</dbReference>
<dbReference type="InterPro" id="IPR036235">
    <property type="entry name" value="Ribosomal_bL12_oligo_N_sf"/>
</dbReference>
<dbReference type="NCBIfam" id="TIGR00855">
    <property type="entry name" value="L12"/>
    <property type="match status" value="1"/>
</dbReference>
<dbReference type="PANTHER" id="PTHR45987">
    <property type="entry name" value="39S RIBOSOMAL PROTEIN L12"/>
    <property type="match status" value="1"/>
</dbReference>
<dbReference type="PANTHER" id="PTHR45987:SF4">
    <property type="entry name" value="LARGE RIBOSOMAL SUBUNIT PROTEIN BL12M"/>
    <property type="match status" value="1"/>
</dbReference>
<dbReference type="Pfam" id="PF00542">
    <property type="entry name" value="Ribosomal_L12"/>
    <property type="match status" value="1"/>
</dbReference>
<dbReference type="Pfam" id="PF16320">
    <property type="entry name" value="Ribosomal_L12_N"/>
    <property type="match status" value="1"/>
</dbReference>
<dbReference type="SUPFAM" id="SSF54736">
    <property type="entry name" value="ClpS-like"/>
    <property type="match status" value="1"/>
</dbReference>
<dbReference type="SUPFAM" id="SSF48300">
    <property type="entry name" value="Ribosomal protein L7/12, oligomerisation (N-terminal) domain"/>
    <property type="match status" value="1"/>
</dbReference>
<evidence type="ECO:0000255" key="1">
    <source>
        <dbReference type="HAMAP-Rule" id="MF_00368"/>
    </source>
</evidence>
<evidence type="ECO:0000305" key="2"/>
<organism>
    <name type="scientific">Thermoanaerobacter pseudethanolicus (strain ATCC 33223 / 39E)</name>
    <name type="common">Clostridium thermohydrosulfuricum</name>
    <dbReference type="NCBI Taxonomy" id="340099"/>
    <lineage>
        <taxon>Bacteria</taxon>
        <taxon>Bacillati</taxon>
        <taxon>Bacillota</taxon>
        <taxon>Clostridia</taxon>
        <taxon>Thermoanaerobacterales</taxon>
        <taxon>Thermoanaerobacteraceae</taxon>
        <taxon>Thermoanaerobacter</taxon>
    </lineage>
</organism>
<reference key="1">
    <citation type="submission" date="2008-01" db="EMBL/GenBank/DDBJ databases">
        <title>Complete sequence of Thermoanaerobacter pseudethanolicus 39E.</title>
        <authorList>
            <person name="Copeland A."/>
            <person name="Lucas S."/>
            <person name="Lapidus A."/>
            <person name="Barry K."/>
            <person name="Glavina del Rio T."/>
            <person name="Dalin E."/>
            <person name="Tice H."/>
            <person name="Pitluck S."/>
            <person name="Bruce D."/>
            <person name="Goodwin L."/>
            <person name="Saunders E."/>
            <person name="Brettin T."/>
            <person name="Detter J.C."/>
            <person name="Han C."/>
            <person name="Schmutz J."/>
            <person name="Larimer F."/>
            <person name="Land M."/>
            <person name="Hauser L."/>
            <person name="Kyrpides N."/>
            <person name="Lykidis A."/>
            <person name="Hemme C."/>
            <person name="Fields M.W."/>
            <person name="He Z."/>
            <person name="Zhou J."/>
            <person name="Richardson P."/>
        </authorList>
    </citation>
    <scope>NUCLEOTIDE SEQUENCE [LARGE SCALE GENOMIC DNA]</scope>
    <source>
        <strain>ATCC 33223 / DSM 2355 / 39E</strain>
    </source>
</reference>
<accession>B0KCJ1</accession>
<feature type="chain" id="PRO_1000121499" description="Large ribosomal subunit protein bL12">
    <location>
        <begin position="1"/>
        <end position="125"/>
    </location>
</feature>
<keyword id="KW-1185">Reference proteome</keyword>
<keyword id="KW-0687">Ribonucleoprotein</keyword>
<keyword id="KW-0689">Ribosomal protein</keyword>
<sequence length="125" mass="13164">MNKEEILEAIKNMTVLELAELVKALEEEFGVSAAAPVAVAAAPAAGAPAAAPAEEKTEFDVILQEVGSDKIKVIKVVREVTGLGLKEAKDLVESAPKPVKEGVSKDEANQIKAKFEEVGAKVEIK</sequence>
<name>RL7_THEP3</name>
<proteinExistence type="inferred from homology"/>
<gene>
    <name evidence="1" type="primary">rplL</name>
    <name type="ordered locus">Teth39_0365</name>
</gene>
<comment type="function">
    <text evidence="1">Forms part of the ribosomal stalk which helps the ribosome interact with GTP-bound translation factors. Is thus essential for accurate translation.</text>
</comment>
<comment type="subunit">
    <text evidence="1">Homodimer. Part of the ribosomal stalk of the 50S ribosomal subunit. Forms a multimeric L10(L12)X complex, where L10 forms an elongated spine to which 2 to 4 L12 dimers bind in a sequential fashion. Binds GTP-bound translation factors.</text>
</comment>
<comment type="similarity">
    <text evidence="1">Belongs to the bacterial ribosomal protein bL12 family.</text>
</comment>